<protein>
    <recommendedName>
        <fullName>RNA annealing protein YRA2</fullName>
    </recommendedName>
</protein>
<evidence type="ECO:0000250" key="1"/>
<evidence type="ECO:0000256" key="2">
    <source>
        <dbReference type="SAM" id="MobiDB-lite"/>
    </source>
</evidence>
<evidence type="ECO:0000305" key="3"/>
<accession>C5DZ92</accession>
<name>YRA2_ZYGRC</name>
<sequence length="169" mass="19997">MSVDNVLDKLVDEKKYRRRDLRNSLASRIGIEDRPSSTPREPPKKRLRFTNVPLDVSDFTLEDMVKEFAEPIYCNFYDLKDSRTAVFEFEDPSVMERVVEKYNETPLNGGTVTVEIFEQERRPDRRRRTQRDNRRGNGRGSRGSHYKRQDRPAMEDELNAELEDYMKSS</sequence>
<organism>
    <name type="scientific">Zygosaccharomyces rouxii (strain ATCC 2623 / CBS 732 / NBRC 1130 / NCYC 568 / NRRL Y-229)</name>
    <dbReference type="NCBI Taxonomy" id="559307"/>
    <lineage>
        <taxon>Eukaryota</taxon>
        <taxon>Fungi</taxon>
        <taxon>Dikarya</taxon>
        <taxon>Ascomycota</taxon>
        <taxon>Saccharomycotina</taxon>
        <taxon>Saccharomycetes</taxon>
        <taxon>Saccharomycetales</taxon>
        <taxon>Saccharomycetaceae</taxon>
        <taxon>Zygosaccharomyces</taxon>
    </lineage>
</organism>
<proteinExistence type="inferred from homology"/>
<feature type="chain" id="PRO_0000409551" description="RNA annealing protein YRA2">
    <location>
        <begin position="1"/>
        <end position="169"/>
    </location>
</feature>
<feature type="domain" description="RRM">
    <location>
        <begin position="45"/>
        <end position="119"/>
    </location>
</feature>
<feature type="region of interest" description="Disordered" evidence="2">
    <location>
        <begin position="119"/>
        <end position="169"/>
    </location>
</feature>
<keyword id="KW-0238">DNA-binding</keyword>
<keyword id="KW-0509">mRNA transport</keyword>
<keyword id="KW-0539">Nucleus</keyword>
<keyword id="KW-1185">Reference proteome</keyword>
<keyword id="KW-0694">RNA-binding</keyword>
<keyword id="KW-0813">Transport</keyword>
<dbReference type="EMBL" id="CU928179">
    <property type="protein sequence ID" value="CAR29176.1"/>
    <property type="molecule type" value="Genomic_DNA"/>
</dbReference>
<dbReference type="RefSeq" id="XP_002498109.1">
    <property type="nucleotide sequence ID" value="XM_002498064.1"/>
</dbReference>
<dbReference type="FunCoup" id="C5DZ92">
    <property type="interactions" value="213"/>
</dbReference>
<dbReference type="STRING" id="559307.C5DZ92"/>
<dbReference type="GeneID" id="8205896"/>
<dbReference type="KEGG" id="zro:ZYRO0G02442g"/>
<dbReference type="HOGENOM" id="CLU_111217_0_0_1"/>
<dbReference type="InParanoid" id="C5DZ92"/>
<dbReference type="Proteomes" id="UP000008536">
    <property type="component" value="Chromosome G"/>
</dbReference>
<dbReference type="GO" id="GO:0005634">
    <property type="term" value="C:nucleus"/>
    <property type="evidence" value="ECO:0007669"/>
    <property type="project" value="UniProtKB-SubCell"/>
</dbReference>
<dbReference type="GO" id="GO:0003677">
    <property type="term" value="F:DNA binding"/>
    <property type="evidence" value="ECO:0007669"/>
    <property type="project" value="UniProtKB-KW"/>
</dbReference>
<dbReference type="GO" id="GO:0003723">
    <property type="term" value="F:RNA binding"/>
    <property type="evidence" value="ECO:0007669"/>
    <property type="project" value="UniProtKB-KW"/>
</dbReference>
<dbReference type="GO" id="GO:0051028">
    <property type="term" value="P:mRNA transport"/>
    <property type="evidence" value="ECO:0007669"/>
    <property type="project" value="UniProtKB-KW"/>
</dbReference>
<dbReference type="CDD" id="cd12295">
    <property type="entry name" value="RRM_YRA2"/>
    <property type="match status" value="1"/>
</dbReference>
<dbReference type="Gene3D" id="3.30.70.330">
    <property type="match status" value="1"/>
</dbReference>
<dbReference type="InterPro" id="IPR025715">
    <property type="entry name" value="FoP_C"/>
</dbReference>
<dbReference type="InterPro" id="IPR012677">
    <property type="entry name" value="Nucleotide-bd_a/b_plait_sf"/>
</dbReference>
<dbReference type="InterPro" id="IPR035979">
    <property type="entry name" value="RBD_domain_sf"/>
</dbReference>
<dbReference type="InterPro" id="IPR000504">
    <property type="entry name" value="RRM_dom"/>
</dbReference>
<dbReference type="InterPro" id="IPR034396">
    <property type="entry name" value="Yra2_RRM"/>
</dbReference>
<dbReference type="Pfam" id="PF13865">
    <property type="entry name" value="FoP_duplication"/>
    <property type="match status" value="1"/>
</dbReference>
<dbReference type="SMART" id="SM00360">
    <property type="entry name" value="RRM"/>
    <property type="match status" value="1"/>
</dbReference>
<dbReference type="SUPFAM" id="SSF54928">
    <property type="entry name" value="RNA-binding domain, RBD"/>
    <property type="match status" value="1"/>
</dbReference>
<gene>
    <name type="primary">YRA2</name>
    <name type="ordered locus">ZYRO0G02442g</name>
</gene>
<reference key="1">
    <citation type="journal article" date="2009" name="Genome Res.">
        <title>Comparative genomics of protoploid Saccharomycetaceae.</title>
        <authorList>
            <consortium name="The Genolevures Consortium"/>
            <person name="Souciet J.-L."/>
            <person name="Dujon B."/>
            <person name="Gaillardin C."/>
            <person name="Johnston M."/>
            <person name="Baret P.V."/>
            <person name="Cliften P."/>
            <person name="Sherman D.J."/>
            <person name="Weissenbach J."/>
            <person name="Westhof E."/>
            <person name="Wincker P."/>
            <person name="Jubin C."/>
            <person name="Poulain J."/>
            <person name="Barbe V."/>
            <person name="Segurens B."/>
            <person name="Artiguenave F."/>
            <person name="Anthouard V."/>
            <person name="Vacherie B."/>
            <person name="Val M.-E."/>
            <person name="Fulton R.S."/>
            <person name="Minx P."/>
            <person name="Wilson R."/>
            <person name="Durrens P."/>
            <person name="Jean G."/>
            <person name="Marck C."/>
            <person name="Martin T."/>
            <person name="Nikolski M."/>
            <person name="Rolland T."/>
            <person name="Seret M.-L."/>
            <person name="Casaregola S."/>
            <person name="Despons L."/>
            <person name="Fairhead C."/>
            <person name="Fischer G."/>
            <person name="Lafontaine I."/>
            <person name="Leh V."/>
            <person name="Lemaire M."/>
            <person name="de Montigny J."/>
            <person name="Neuveglise C."/>
            <person name="Thierry A."/>
            <person name="Blanc-Lenfle I."/>
            <person name="Bleykasten C."/>
            <person name="Diffels J."/>
            <person name="Fritsch E."/>
            <person name="Frangeul L."/>
            <person name="Goeffon A."/>
            <person name="Jauniaux N."/>
            <person name="Kachouri-Lafond R."/>
            <person name="Payen C."/>
            <person name="Potier S."/>
            <person name="Pribylova L."/>
            <person name="Ozanne C."/>
            <person name="Richard G.-F."/>
            <person name="Sacerdot C."/>
            <person name="Straub M.-L."/>
            <person name="Talla E."/>
        </authorList>
    </citation>
    <scope>NUCLEOTIDE SEQUENCE [LARGE SCALE GENOMIC DNA]</scope>
    <source>
        <strain>ATCC 2623 / CBS 732 / BCRC 21506 / NBRC 1130 / NCYC 568 / NRRL Y-229</strain>
    </source>
</reference>
<comment type="function">
    <text evidence="1">Involved in export of poly(A) mRNAs from the nucleus. Recruited to the coding sequences as well as poly-A sites of active genes (By similarity).</text>
</comment>
<comment type="subunit">
    <text evidence="1">Associates with mRNPs.</text>
</comment>
<comment type="subcellular location">
    <subcellularLocation>
        <location evidence="1">Nucleus</location>
    </subcellularLocation>
</comment>
<comment type="similarity">
    <text evidence="3">Belongs to the YRA1 family.</text>
</comment>